<reference evidence="6 7" key="1">
    <citation type="journal article" date="2003" name="Dev. Dyn.">
        <title>Molecular components of the endoderm specification pathway in Xenopus tropicalis.</title>
        <authorList>
            <person name="D'Souza A."/>
            <person name="Lee M."/>
            <person name="Taverner N."/>
            <person name="Mason J."/>
            <person name="Carruthers S."/>
            <person name="Smith J.C."/>
            <person name="Amaya E."/>
            <person name="Papalopulu N."/>
            <person name="Zorn A.M."/>
        </authorList>
    </citation>
    <scope>NUCLEOTIDE SEQUENCE [MRNA]</scope>
    <scope>TISSUE SPECIFICITY</scope>
    <source>
        <tissue evidence="5">Neurula</tissue>
    </source>
</reference>
<comment type="function">
    <text evidence="5">Probable transcription factor.</text>
</comment>
<comment type="subcellular location">
    <subcellularLocation>
        <location evidence="2 6">Nucleus</location>
    </subcellularLocation>
</comment>
<comment type="tissue specificity">
    <text evidence="5">Expressed in the endoderm of mid-gastrula embryos. At neurula stage, expressed in the notochord and in ciliated cells of the epithelium. During tailbud stages, expressed throughout the endoderm as well as in the notochord and neural floor plate.</text>
</comment>
<keyword id="KW-0238">DNA-binding</keyword>
<keyword id="KW-0539">Nucleus</keyword>
<keyword id="KW-1185">Reference proteome</keyword>
<keyword id="KW-0804">Transcription</keyword>
<keyword id="KW-0805">Transcription regulation</keyword>
<gene>
    <name evidence="1" type="primary">foxa1</name>
</gene>
<sequence length="428" mass="46606">MLGIVKMEGHETTDWSNYYQDTQEAYSSVPVSNMTQGLASMNTYMTMNPMSSSSNMTAGSFNMSYANSGLGAGLSPSGMSGMGAGSASAMNGMGSGVSSMGTALSPSSMNAMSAQQASINSLSYSGMNPGMSPMAYGPSNMNRTRDTKTFRRSYPHAKPPYSYISLITMAIQQAPSKMLTLSEIYQWIMDLFLYYRQNQQRWQNSIRHSLSFNDCFVKVARSPDKPGKGSYWTLHPDSGNMFENGCYLRRQKRFKCEKQQGGKGSQDGRKDVSGPSSPLHRVHGKSSQMDSSSSMSNPSSSPQSLEHNGSNGEMKPQVAAGPSPLSSHQNHSTHSLAHETHIHLKGDPHYSFNHPFSINNLMSSSEQQHKLDFKAYEQALQQYSSYSGGLPGMPLGSPSMAGRGSIEPSALEPTYYQGVYSRPVLNTS</sequence>
<evidence type="ECO:0000250" key="1">
    <source>
        <dbReference type="UniProtKB" id="Q6LD29"/>
    </source>
</evidence>
<evidence type="ECO:0000255" key="2"/>
<evidence type="ECO:0000255" key="3">
    <source>
        <dbReference type="PROSITE-ProRule" id="PRU00089"/>
    </source>
</evidence>
<evidence type="ECO:0000256" key="4">
    <source>
        <dbReference type="SAM" id="MobiDB-lite"/>
    </source>
</evidence>
<evidence type="ECO:0000269" key="5">
    <source>
    </source>
</evidence>
<evidence type="ECO:0000305" key="6"/>
<evidence type="ECO:0000312" key="7">
    <source>
        <dbReference type="EMBL" id="AAN76331.1"/>
    </source>
</evidence>
<accession>Q8AWH1</accession>
<feature type="chain" id="PRO_0000248855" description="Forkhead box protein A1">
    <location>
        <begin position="1"/>
        <end position="428"/>
    </location>
</feature>
<feature type="DNA-binding region" description="Fork-head" evidence="3">
    <location>
        <begin position="158"/>
        <end position="252"/>
    </location>
</feature>
<feature type="region of interest" description="Disordered" evidence="4">
    <location>
        <begin position="257"/>
        <end position="337"/>
    </location>
</feature>
<feature type="compositionally biased region" description="Basic and acidic residues" evidence="4">
    <location>
        <begin position="257"/>
        <end position="272"/>
    </location>
</feature>
<feature type="compositionally biased region" description="Low complexity" evidence="4">
    <location>
        <begin position="286"/>
        <end position="304"/>
    </location>
</feature>
<feature type="compositionally biased region" description="Polar residues" evidence="4">
    <location>
        <begin position="324"/>
        <end position="335"/>
    </location>
</feature>
<name>FOXA1_XENTR</name>
<organism>
    <name type="scientific">Xenopus tropicalis</name>
    <name type="common">Western clawed frog</name>
    <name type="synonym">Silurana tropicalis</name>
    <dbReference type="NCBI Taxonomy" id="8364"/>
    <lineage>
        <taxon>Eukaryota</taxon>
        <taxon>Metazoa</taxon>
        <taxon>Chordata</taxon>
        <taxon>Craniata</taxon>
        <taxon>Vertebrata</taxon>
        <taxon>Euteleostomi</taxon>
        <taxon>Amphibia</taxon>
        <taxon>Batrachia</taxon>
        <taxon>Anura</taxon>
        <taxon>Pipoidea</taxon>
        <taxon>Pipidae</taxon>
        <taxon>Xenopodinae</taxon>
        <taxon>Xenopus</taxon>
        <taxon>Silurana</taxon>
    </lineage>
</organism>
<dbReference type="EMBL" id="AY157637">
    <property type="protein sequence ID" value="AAN76331.1"/>
    <property type="molecule type" value="mRNA"/>
</dbReference>
<dbReference type="RefSeq" id="NP_989419.1">
    <property type="nucleotide sequence ID" value="NM_204088.1"/>
</dbReference>
<dbReference type="SMR" id="Q8AWH1"/>
<dbReference type="FunCoup" id="Q8AWH1">
    <property type="interactions" value="4748"/>
</dbReference>
<dbReference type="STRING" id="8364.ENSXETP00000050566"/>
<dbReference type="PaxDb" id="8364-ENSXETP00000026943"/>
<dbReference type="GeneID" id="395059"/>
<dbReference type="KEGG" id="xtr:395059"/>
<dbReference type="AGR" id="Xenbase:XB-GENE-487352"/>
<dbReference type="CTD" id="3169"/>
<dbReference type="Xenbase" id="XB-GENE-487352">
    <property type="gene designation" value="foxa1"/>
</dbReference>
<dbReference type="eggNOG" id="KOG3563">
    <property type="taxonomic scope" value="Eukaryota"/>
</dbReference>
<dbReference type="InParanoid" id="Q8AWH1"/>
<dbReference type="OMA" id="WSSYYTD"/>
<dbReference type="OrthoDB" id="5954824at2759"/>
<dbReference type="Proteomes" id="UP000008143">
    <property type="component" value="Chromosome 8"/>
</dbReference>
<dbReference type="Bgee" id="ENSXETG00000025867">
    <property type="expression patterns" value="Expressed in neurula embryo and 36 other cell types or tissues"/>
</dbReference>
<dbReference type="GO" id="GO:0005634">
    <property type="term" value="C:nucleus"/>
    <property type="evidence" value="ECO:0007669"/>
    <property type="project" value="UniProtKB-SubCell"/>
</dbReference>
<dbReference type="GO" id="GO:0003700">
    <property type="term" value="F:DNA-binding transcription factor activity"/>
    <property type="evidence" value="ECO:0007669"/>
    <property type="project" value="InterPro"/>
</dbReference>
<dbReference type="GO" id="GO:0019904">
    <property type="term" value="F:protein domain specific binding"/>
    <property type="evidence" value="ECO:0007669"/>
    <property type="project" value="InterPro"/>
</dbReference>
<dbReference type="GO" id="GO:0043565">
    <property type="term" value="F:sequence-specific DNA binding"/>
    <property type="evidence" value="ECO:0007669"/>
    <property type="project" value="InterPro"/>
</dbReference>
<dbReference type="FunFam" id="1.10.10.10:FF:000042">
    <property type="entry name" value="hepatocyte nuclear factor 3-beta"/>
    <property type="match status" value="1"/>
</dbReference>
<dbReference type="Gene3D" id="1.10.10.10">
    <property type="entry name" value="Winged helix-like DNA-binding domain superfamily/Winged helix DNA-binding domain"/>
    <property type="match status" value="1"/>
</dbReference>
<dbReference type="InterPro" id="IPR013638">
    <property type="entry name" value="Fork-head_N"/>
</dbReference>
<dbReference type="InterPro" id="IPR001766">
    <property type="entry name" value="Fork_head_dom"/>
</dbReference>
<dbReference type="InterPro" id="IPR018533">
    <property type="entry name" value="Forkhead_box_C"/>
</dbReference>
<dbReference type="InterPro" id="IPR050211">
    <property type="entry name" value="FOX_domain-containing"/>
</dbReference>
<dbReference type="InterPro" id="IPR018122">
    <property type="entry name" value="TF_fork_head_CS_1"/>
</dbReference>
<dbReference type="InterPro" id="IPR030456">
    <property type="entry name" value="TF_fork_head_CS_2"/>
</dbReference>
<dbReference type="InterPro" id="IPR036388">
    <property type="entry name" value="WH-like_DNA-bd_sf"/>
</dbReference>
<dbReference type="InterPro" id="IPR036390">
    <property type="entry name" value="WH_DNA-bd_sf"/>
</dbReference>
<dbReference type="PANTHER" id="PTHR11829">
    <property type="entry name" value="FORKHEAD BOX PROTEIN"/>
    <property type="match status" value="1"/>
</dbReference>
<dbReference type="PANTHER" id="PTHR11829:SF195">
    <property type="entry name" value="HEPATOCYTE NUCLEAR FACTOR 3-ALPHA"/>
    <property type="match status" value="1"/>
</dbReference>
<dbReference type="Pfam" id="PF00250">
    <property type="entry name" value="Forkhead"/>
    <property type="match status" value="1"/>
</dbReference>
<dbReference type="Pfam" id="PF08430">
    <property type="entry name" value="Forkhead_N"/>
    <property type="match status" value="1"/>
</dbReference>
<dbReference type="Pfam" id="PF09354">
    <property type="entry name" value="HNF_C"/>
    <property type="match status" value="1"/>
</dbReference>
<dbReference type="PRINTS" id="PR00053">
    <property type="entry name" value="FORKHEAD"/>
</dbReference>
<dbReference type="SMART" id="SM00339">
    <property type="entry name" value="FH"/>
    <property type="match status" value="1"/>
</dbReference>
<dbReference type="SUPFAM" id="SSF46785">
    <property type="entry name" value="Winged helix' DNA-binding domain"/>
    <property type="match status" value="1"/>
</dbReference>
<dbReference type="PROSITE" id="PS00657">
    <property type="entry name" value="FORK_HEAD_1"/>
    <property type="match status" value="1"/>
</dbReference>
<dbReference type="PROSITE" id="PS00658">
    <property type="entry name" value="FORK_HEAD_2"/>
    <property type="match status" value="1"/>
</dbReference>
<dbReference type="PROSITE" id="PS50039">
    <property type="entry name" value="FORK_HEAD_3"/>
    <property type="match status" value="1"/>
</dbReference>
<proteinExistence type="evidence at transcript level"/>
<protein>
    <recommendedName>
        <fullName>Forkhead box protein A1</fullName>
        <shortName>FoxA1</shortName>
    </recommendedName>
    <alternativeName>
        <fullName>tFoxA1</fullName>
    </alternativeName>
</protein>